<keyword id="KW-0235">DNA replication</keyword>
<keyword id="KW-0236">DNA replication inhibitor</keyword>
<keyword id="KW-1185">Reference proteome</keyword>
<organism>
    <name type="scientific">Citrobacter koseri (strain ATCC BAA-895 / CDC 4225-83 / SGSC4696)</name>
    <dbReference type="NCBI Taxonomy" id="290338"/>
    <lineage>
        <taxon>Bacteria</taxon>
        <taxon>Pseudomonadati</taxon>
        <taxon>Pseudomonadota</taxon>
        <taxon>Gammaproteobacteria</taxon>
        <taxon>Enterobacterales</taxon>
        <taxon>Enterobacteriaceae</taxon>
        <taxon>Citrobacter</taxon>
    </lineage>
</organism>
<dbReference type="EMBL" id="CP000822">
    <property type="protein sequence ID" value="ABV11458.1"/>
    <property type="molecule type" value="Genomic_DNA"/>
</dbReference>
<dbReference type="SMR" id="A8AD95"/>
<dbReference type="STRING" id="290338.CKO_00295"/>
<dbReference type="KEGG" id="cko:CKO_00295"/>
<dbReference type="HOGENOM" id="CLU_072265_1_1_6"/>
<dbReference type="OrthoDB" id="9784878at2"/>
<dbReference type="Proteomes" id="UP000008148">
    <property type="component" value="Chromosome"/>
</dbReference>
<dbReference type="GO" id="GO:0006270">
    <property type="term" value="P:DNA replication initiation"/>
    <property type="evidence" value="ECO:0007669"/>
    <property type="project" value="TreeGrafter"/>
</dbReference>
<dbReference type="GO" id="GO:0032297">
    <property type="term" value="P:negative regulation of DNA-templated DNA replication initiation"/>
    <property type="evidence" value="ECO:0007669"/>
    <property type="project" value="InterPro"/>
</dbReference>
<dbReference type="FunFam" id="1.10.8.60:FF:000024">
    <property type="entry name" value="DnaA regulatory inactivator Hda"/>
    <property type="match status" value="1"/>
</dbReference>
<dbReference type="FunFam" id="3.40.50.300:FF:000452">
    <property type="entry name" value="DnaA regulatory inactivator Hda"/>
    <property type="match status" value="1"/>
</dbReference>
<dbReference type="Gene3D" id="1.10.8.60">
    <property type="match status" value="1"/>
</dbReference>
<dbReference type="Gene3D" id="3.40.50.300">
    <property type="entry name" value="P-loop containing nucleotide triphosphate hydrolases"/>
    <property type="match status" value="1"/>
</dbReference>
<dbReference type="HAMAP" id="MF_01158">
    <property type="entry name" value="Hda"/>
    <property type="match status" value="1"/>
</dbReference>
<dbReference type="InterPro" id="IPR020591">
    <property type="entry name" value="Chromosome_initiator_DnaA-like"/>
</dbReference>
<dbReference type="InterPro" id="IPR013317">
    <property type="entry name" value="DnaA_dom"/>
</dbReference>
<dbReference type="InterPro" id="IPR017788">
    <property type="entry name" value="Hda"/>
</dbReference>
<dbReference type="InterPro" id="IPR022864">
    <property type="entry name" value="Hda_Enterobact"/>
</dbReference>
<dbReference type="InterPro" id="IPR055199">
    <property type="entry name" value="Hda_lid"/>
</dbReference>
<dbReference type="InterPro" id="IPR027417">
    <property type="entry name" value="P-loop_NTPase"/>
</dbReference>
<dbReference type="NCBIfam" id="TIGR03420">
    <property type="entry name" value="DnaA_homol_Hda"/>
    <property type="match status" value="1"/>
</dbReference>
<dbReference type="NCBIfam" id="NF005982">
    <property type="entry name" value="PRK08084.1"/>
    <property type="match status" value="1"/>
</dbReference>
<dbReference type="PANTHER" id="PTHR30050">
    <property type="entry name" value="CHROMOSOMAL REPLICATION INITIATOR PROTEIN DNAA"/>
    <property type="match status" value="1"/>
</dbReference>
<dbReference type="PANTHER" id="PTHR30050:SF5">
    <property type="entry name" value="DNAA REGULATORY INACTIVATOR HDA"/>
    <property type="match status" value="1"/>
</dbReference>
<dbReference type="Pfam" id="PF00308">
    <property type="entry name" value="Bac_DnaA"/>
    <property type="match status" value="1"/>
</dbReference>
<dbReference type="Pfam" id="PF22688">
    <property type="entry name" value="Hda_lid"/>
    <property type="match status" value="1"/>
</dbReference>
<dbReference type="PRINTS" id="PR00051">
    <property type="entry name" value="DNAA"/>
</dbReference>
<dbReference type="SUPFAM" id="SSF52540">
    <property type="entry name" value="P-loop containing nucleoside triphosphate hydrolases"/>
    <property type="match status" value="1"/>
</dbReference>
<feature type="chain" id="PRO_1000065558" description="DnaA regulatory inactivator Hda">
    <location>
        <begin position="1"/>
        <end position="241"/>
    </location>
</feature>
<evidence type="ECO:0000250" key="1"/>
<evidence type="ECO:0000255" key="2">
    <source>
        <dbReference type="HAMAP-Rule" id="MF_01158"/>
    </source>
</evidence>
<reference key="1">
    <citation type="submission" date="2007-08" db="EMBL/GenBank/DDBJ databases">
        <authorList>
            <consortium name="The Citrobacter koseri Genome Sequencing Project"/>
            <person name="McClelland M."/>
            <person name="Sanderson E.K."/>
            <person name="Porwollik S."/>
            <person name="Spieth J."/>
            <person name="Clifton W.S."/>
            <person name="Latreille P."/>
            <person name="Courtney L."/>
            <person name="Wang C."/>
            <person name="Pepin K."/>
            <person name="Bhonagiri V."/>
            <person name="Nash W."/>
            <person name="Johnson M."/>
            <person name="Thiruvilangam P."/>
            <person name="Wilson R."/>
        </authorList>
    </citation>
    <scope>NUCLEOTIDE SEQUENCE [LARGE SCALE GENOMIC DNA]</scope>
    <source>
        <strain>ATCC BAA-895 / CDC 4225-83 / SGSC4696</strain>
    </source>
</reference>
<sequence length="241" mass="27513">MESWIEVSLNTPAQLSLPLYLPDDETFASFWPGDNASLLAALQNVLRQEHSGYIYLWSREGAGRSHLLHAACAELSQRGDAVGYVPLDKRTWFVPEVLDGMEHLSLVCIDNIECVAGDELWEMAIFDLYNRILESGKTRLLITGDRPPRQLKLGLPDLASRLDWGQIYKLQPLSDEDKLQALQLRARLRGFELPEDVGRFLLKRLDREMRTLFITLDQLDHASITAQRKLTIPFVKEILTL</sequence>
<proteinExistence type="inferred from homology"/>
<protein>
    <recommendedName>
        <fullName evidence="2">DnaA regulatory inactivator Hda</fullName>
    </recommendedName>
</protein>
<name>HDA_CITK8</name>
<comment type="function">
    <text evidence="1">Mediates the interaction of DNA replication initiator protein DnaA with DNA polymerase subunit beta sliding clamp (dnaN). Stimulates hydrolysis of ATP-DnaA to ADP-DnaA, rendering DnaA inactive for reinitiation, a process called regulatory inhibition of DnaA or RIDA (By similarity).</text>
</comment>
<comment type="subunit">
    <text evidence="2">The active form seems to be an ADP-bound monomer. Forms the RIDA complex (regulatory inactivation of DnaA) of ATP-DnaA, ADP-Hda and the DNA-loaded beta sliding clamp (dnaN).</text>
</comment>
<comment type="similarity">
    <text evidence="2">Belongs to the DnaA family. HdA subfamily.</text>
</comment>
<accession>A8AD95</accession>
<gene>
    <name evidence="2" type="primary">hda</name>
    <name type="ordered locus">CKO_00295</name>
</gene>